<organism>
    <name type="scientific">Mus musculus</name>
    <name type="common">Mouse</name>
    <dbReference type="NCBI Taxonomy" id="10090"/>
    <lineage>
        <taxon>Eukaryota</taxon>
        <taxon>Metazoa</taxon>
        <taxon>Chordata</taxon>
        <taxon>Craniata</taxon>
        <taxon>Vertebrata</taxon>
        <taxon>Euteleostomi</taxon>
        <taxon>Mammalia</taxon>
        <taxon>Eutheria</taxon>
        <taxon>Euarchontoglires</taxon>
        <taxon>Glires</taxon>
        <taxon>Rodentia</taxon>
        <taxon>Myomorpha</taxon>
        <taxon>Muroidea</taxon>
        <taxon>Muridae</taxon>
        <taxon>Murinae</taxon>
        <taxon>Mus</taxon>
        <taxon>Mus</taxon>
    </lineage>
</organism>
<evidence type="ECO:0000255" key="1"/>
<evidence type="ECO:0000255" key="2">
    <source>
        <dbReference type="PROSITE-ProRule" id="PRU00175"/>
    </source>
</evidence>
<evidence type="ECO:0000255" key="3">
    <source>
        <dbReference type="PROSITE-ProRule" id="PRU01123"/>
    </source>
</evidence>
<evidence type="ECO:0000256" key="4">
    <source>
        <dbReference type="SAM" id="MobiDB-lite"/>
    </source>
</evidence>
<evidence type="ECO:0007744" key="5">
    <source>
    </source>
</evidence>
<dbReference type="EMBL" id="AC153007">
    <property type="status" value="NOT_ANNOTATED_CDS"/>
    <property type="molecule type" value="Genomic_DNA"/>
</dbReference>
<dbReference type="CCDS" id="CCDS40321.2"/>
<dbReference type="RefSeq" id="NP_001074619.2">
    <property type="nucleotide sequence ID" value="NM_001081150.2"/>
</dbReference>
<dbReference type="SMR" id="D3YY23"/>
<dbReference type="FunCoup" id="D3YY23">
    <property type="interactions" value="1602"/>
</dbReference>
<dbReference type="IntAct" id="D3YY23">
    <property type="interactions" value="1"/>
</dbReference>
<dbReference type="STRING" id="10090.ENSMUSP00000066403"/>
<dbReference type="iPTMnet" id="D3YY23"/>
<dbReference type="PhosphoSitePlus" id="D3YY23"/>
<dbReference type="jPOST" id="D3YY23"/>
<dbReference type="PaxDb" id="10090-ENSMUSP00000066403"/>
<dbReference type="ProteomicsDB" id="286227"/>
<dbReference type="Antibodypedia" id="8694">
    <property type="antibodies" value="111 antibodies from 21 providers"/>
</dbReference>
<dbReference type="Ensembl" id="ENSMUST00000239119.2">
    <property type="protein sequence ID" value="ENSMUSP00000158932.2"/>
    <property type="gene ID" value="ENSMUSG00000039633.8"/>
</dbReference>
<dbReference type="GeneID" id="244421"/>
<dbReference type="UCSC" id="uc009llj.1">
    <property type="organism name" value="mouse"/>
</dbReference>
<dbReference type="AGR" id="MGI:3609241"/>
<dbReference type="MGI" id="MGI:3609241">
    <property type="gene designation" value="Lonrf1"/>
</dbReference>
<dbReference type="VEuPathDB" id="HostDB:ENSMUSG00000039633"/>
<dbReference type="eggNOG" id="KOG4159">
    <property type="taxonomic scope" value="Eukaryota"/>
</dbReference>
<dbReference type="GeneTree" id="ENSGT00440000033329"/>
<dbReference type="HOGENOM" id="CLU_013989_1_1_1"/>
<dbReference type="InParanoid" id="D3YY23"/>
<dbReference type="TreeFam" id="TF327043"/>
<dbReference type="Reactome" id="R-MMU-983168">
    <property type="pathway name" value="Antigen processing: Ubiquitination &amp; Proteasome degradation"/>
</dbReference>
<dbReference type="ChiTaRS" id="Lonrf1">
    <property type="organism name" value="mouse"/>
</dbReference>
<dbReference type="PRO" id="PR:D3YY23"/>
<dbReference type="Proteomes" id="UP000000589">
    <property type="component" value="Chromosome 8"/>
</dbReference>
<dbReference type="RNAct" id="D3YY23">
    <property type="molecule type" value="protein"/>
</dbReference>
<dbReference type="Bgee" id="ENSMUSG00000039633">
    <property type="expression patterns" value="Expressed in otolith organ and 221 other cell types or tissues"/>
</dbReference>
<dbReference type="ExpressionAtlas" id="D3YY23">
    <property type="expression patterns" value="baseline and differential"/>
</dbReference>
<dbReference type="GO" id="GO:0005737">
    <property type="term" value="C:cytoplasm"/>
    <property type="evidence" value="ECO:0007669"/>
    <property type="project" value="UniProtKB-ARBA"/>
</dbReference>
<dbReference type="GO" id="GO:0008270">
    <property type="term" value="F:zinc ion binding"/>
    <property type="evidence" value="ECO:0007669"/>
    <property type="project" value="UniProtKB-KW"/>
</dbReference>
<dbReference type="CDD" id="cd16514">
    <property type="entry name" value="RING-HC_LONFs_rpt2"/>
    <property type="match status" value="1"/>
</dbReference>
<dbReference type="FunFam" id="2.30.130.40:FF:000005">
    <property type="entry name" value="LON peptidase N-terminal domain and ring finger 1"/>
    <property type="match status" value="1"/>
</dbReference>
<dbReference type="FunFam" id="3.30.40.10:FF:000307">
    <property type="entry name" value="LON peptidase N-terminal domain and RING finger protein 1"/>
    <property type="match status" value="1"/>
</dbReference>
<dbReference type="Gene3D" id="2.30.130.40">
    <property type="entry name" value="LON domain-like"/>
    <property type="match status" value="1"/>
</dbReference>
<dbReference type="Gene3D" id="1.25.40.10">
    <property type="entry name" value="Tetratricopeptide repeat domain"/>
    <property type="match status" value="1"/>
</dbReference>
<dbReference type="Gene3D" id="3.30.40.10">
    <property type="entry name" value="Zinc/RING finger domain, C3HC4 (zinc finger)"/>
    <property type="match status" value="2"/>
</dbReference>
<dbReference type="InterPro" id="IPR003111">
    <property type="entry name" value="Lon_prtase_N"/>
</dbReference>
<dbReference type="InterPro" id="IPR046336">
    <property type="entry name" value="Lon_prtase_N_sf"/>
</dbReference>
<dbReference type="InterPro" id="IPR015947">
    <property type="entry name" value="PUA-like_sf"/>
</dbReference>
<dbReference type="InterPro" id="IPR011990">
    <property type="entry name" value="TPR-like_helical_dom_sf"/>
</dbReference>
<dbReference type="InterPro" id="IPR019734">
    <property type="entry name" value="TPR_rpt"/>
</dbReference>
<dbReference type="InterPro" id="IPR001841">
    <property type="entry name" value="Znf_RING"/>
</dbReference>
<dbReference type="InterPro" id="IPR013083">
    <property type="entry name" value="Znf_RING/FYVE/PHD"/>
</dbReference>
<dbReference type="InterPro" id="IPR017907">
    <property type="entry name" value="Znf_RING_CS"/>
</dbReference>
<dbReference type="PANTHER" id="PTHR23327:SF4">
    <property type="entry name" value="LON PEPTIDASE N-TERMINAL DOMAIN AND RING FINGER PROTEIN 1"/>
    <property type="match status" value="1"/>
</dbReference>
<dbReference type="PANTHER" id="PTHR23327">
    <property type="entry name" value="RING FINGER PROTEIN 127"/>
    <property type="match status" value="1"/>
</dbReference>
<dbReference type="Pfam" id="PF02190">
    <property type="entry name" value="LON_substr_bdg"/>
    <property type="match status" value="1"/>
</dbReference>
<dbReference type="Pfam" id="PF13923">
    <property type="entry name" value="zf-C3HC4_2"/>
    <property type="match status" value="1"/>
</dbReference>
<dbReference type="Pfam" id="PF15227">
    <property type="entry name" value="zf-C3HC4_4"/>
    <property type="match status" value="1"/>
</dbReference>
<dbReference type="SMART" id="SM00464">
    <property type="entry name" value="LON"/>
    <property type="match status" value="1"/>
</dbReference>
<dbReference type="SMART" id="SM00184">
    <property type="entry name" value="RING"/>
    <property type="match status" value="2"/>
</dbReference>
<dbReference type="SMART" id="SM00028">
    <property type="entry name" value="TPR"/>
    <property type="match status" value="4"/>
</dbReference>
<dbReference type="SUPFAM" id="SSF88697">
    <property type="entry name" value="PUA domain-like"/>
    <property type="match status" value="1"/>
</dbReference>
<dbReference type="SUPFAM" id="SSF57850">
    <property type="entry name" value="RING/U-box"/>
    <property type="match status" value="2"/>
</dbReference>
<dbReference type="SUPFAM" id="SSF48452">
    <property type="entry name" value="TPR-like"/>
    <property type="match status" value="1"/>
</dbReference>
<dbReference type="PROSITE" id="PS51787">
    <property type="entry name" value="LON_N"/>
    <property type="match status" value="1"/>
</dbReference>
<dbReference type="PROSITE" id="PS50293">
    <property type="entry name" value="TPR_REGION"/>
    <property type="match status" value="1"/>
</dbReference>
<dbReference type="PROSITE" id="PS00518">
    <property type="entry name" value="ZF_RING_1"/>
    <property type="match status" value="2"/>
</dbReference>
<dbReference type="PROSITE" id="PS50089">
    <property type="entry name" value="ZF_RING_2"/>
    <property type="match status" value="2"/>
</dbReference>
<feature type="chain" id="PRO_0000436226" description="LON peptidase N-terminal domain and RING finger protein 1">
    <location>
        <begin position="1"/>
        <end position="762"/>
    </location>
</feature>
<feature type="repeat" description="TPR 1" evidence="1">
    <location>
        <begin position="47"/>
        <end position="80"/>
    </location>
</feature>
<feature type="repeat" description="TPR 2" evidence="1">
    <location>
        <begin position="201"/>
        <end position="233"/>
    </location>
</feature>
<feature type="repeat" description="TPR 3" evidence="1">
    <location>
        <begin position="235"/>
        <end position="267"/>
    </location>
</feature>
<feature type="repeat" description="TPR 4" evidence="1">
    <location>
        <begin position="268"/>
        <end position="301"/>
    </location>
</feature>
<feature type="domain" description="Lon N-terminal" evidence="3">
    <location>
        <begin position="547"/>
        <end position="757"/>
    </location>
</feature>
<feature type="zinc finger region" description="RING-type 1" evidence="2">
    <location>
        <begin position="118"/>
        <end position="154"/>
    </location>
</feature>
<feature type="zinc finger region" description="RING-type 2" evidence="2">
    <location>
        <begin position="468"/>
        <end position="506"/>
    </location>
</feature>
<feature type="region of interest" description="Disordered" evidence="4">
    <location>
        <begin position="1"/>
        <end position="35"/>
    </location>
</feature>
<feature type="modified residue" description="Phosphoserine" evidence="5">
    <location>
        <position position="420"/>
    </location>
</feature>
<gene>
    <name type="primary">Lonrf1</name>
</gene>
<keyword id="KW-0479">Metal-binding</keyword>
<keyword id="KW-0597">Phosphoprotein</keyword>
<keyword id="KW-1185">Reference proteome</keyword>
<keyword id="KW-0677">Repeat</keyword>
<keyword id="KW-0802">TPR repeat</keyword>
<keyword id="KW-0862">Zinc</keyword>
<keyword id="KW-0863">Zinc-finger</keyword>
<proteinExistence type="evidence at protein level"/>
<protein>
    <recommendedName>
        <fullName>LON peptidase N-terminal domain and RING finger protein 1</fullName>
    </recommendedName>
</protein>
<reference key="1">
    <citation type="journal article" date="2009" name="PLoS Biol.">
        <title>Lineage-specific biology revealed by a finished genome assembly of the mouse.</title>
        <authorList>
            <person name="Church D.M."/>
            <person name="Goodstadt L."/>
            <person name="Hillier L.W."/>
            <person name="Zody M.C."/>
            <person name="Goldstein S."/>
            <person name="She X."/>
            <person name="Bult C.J."/>
            <person name="Agarwala R."/>
            <person name="Cherry J.L."/>
            <person name="DiCuccio M."/>
            <person name="Hlavina W."/>
            <person name="Kapustin Y."/>
            <person name="Meric P."/>
            <person name="Maglott D."/>
            <person name="Birtle Z."/>
            <person name="Marques A.C."/>
            <person name="Graves T."/>
            <person name="Zhou S."/>
            <person name="Teague B."/>
            <person name="Potamousis K."/>
            <person name="Churas C."/>
            <person name="Place M."/>
            <person name="Herschleb J."/>
            <person name="Runnheim R."/>
            <person name="Forrest D."/>
            <person name="Amos-Landgraf J."/>
            <person name="Schwartz D.C."/>
            <person name="Cheng Z."/>
            <person name="Lindblad-Toh K."/>
            <person name="Eichler E.E."/>
            <person name="Ponting C.P."/>
        </authorList>
    </citation>
    <scope>NUCLEOTIDE SEQUENCE [LARGE SCALE GENOMIC DNA]</scope>
    <source>
        <strain>C57BL/6J</strain>
    </source>
</reference>
<reference key="2">
    <citation type="journal article" date="2010" name="Cell">
        <title>A tissue-specific atlas of mouse protein phosphorylation and expression.</title>
        <authorList>
            <person name="Huttlin E.L."/>
            <person name="Jedrychowski M.P."/>
            <person name="Elias J.E."/>
            <person name="Goswami T."/>
            <person name="Rad R."/>
            <person name="Beausoleil S.A."/>
            <person name="Villen J."/>
            <person name="Haas W."/>
            <person name="Sowa M.E."/>
            <person name="Gygi S.P."/>
        </authorList>
    </citation>
    <scope>PHOSPHORYLATION [LARGE SCALE ANALYSIS] AT SER-420</scope>
    <scope>IDENTIFICATION BY MASS SPECTROMETRY [LARGE SCALE ANALYSIS]</scope>
    <source>
        <tissue>Brain</tissue>
    </source>
</reference>
<accession>D3YY23</accession>
<name>LONF1_MOUSE</name>
<sequence>MSSPAVARASPGGNREASGGPRSRNGPWEVGGGGERLERAGAESGRWELLLRRGELLALGGHLKGALEAFAAALRRGAPARPERLGSLVDCLVFSYRLRHGLRWSAAPAAGAAGLLSCLSCRGFLSEPVTVPCGHSYCRRCLRRELRARCRLCRDRLPPAAAASEGTPRPPPLAAAIADFRTSVVLNHLAEKWFPGQRERARAAGRLGELLHEGRYREALAAACDALRAEPSDLTLKIYRAESYAGLQEFKAALEDLNAVLFQLPNWPEVYFRKGKVLQDAGFLGDALQLFLQCLALDEDFAPAKLQVEKILCDLLSPENVREGLKESSWSSLPCIKSKPLGFPSVMEQPHSPAELGLKQPEERVEDAPEPVKGSLSRAQSAQAISAAAVPAREDGLKRVCSEPLLSAQGKGVLLKRKLSLLEQDVLINEDGRSKLKKQSESPSEDCMFSIAYGDIPEELIDVSDFECSLCMRLFFEPVTTPCGHSFCKNCLERCLDHAPYCPLCKESLKEYLADRRYCVTQLLEELIVKYLPDELSERKKIYDEETAELSHLTKNVPIFVCTMAYPTVPCPLHVFEPRYRLMIRRSIQTGTKQFGMCVSDTQNSFADYGCMLQIRNVHFLPDGRSVVDTVGGKRFRVLKRGMKDGYCTADIEYLEDVKIENGDEIRSLRELHDSVYSQACSWFQNLRDRFRSQILQHFGSMPEREENLQATPNGPAWCWWLLAVLPVDPRYQLSVLSMKSLEERLTKIQHILTYFSRDQSK</sequence>